<keyword id="KW-0002">3D-structure</keyword>
<keyword id="KW-0007">Acetylation</keyword>
<keyword id="KW-0963">Cytoplasm</keyword>
<keyword id="KW-0255">Endonuclease</keyword>
<keyword id="KW-0269">Exonuclease</keyword>
<keyword id="KW-0378">Hydrolase</keyword>
<keyword id="KW-0479">Metal-binding</keyword>
<keyword id="KW-0540">Nuclease</keyword>
<keyword id="KW-1185">Reference proteome</keyword>
<keyword id="KW-0694">RNA-binding</keyword>
<keyword id="KW-0698">rRNA processing</keyword>
<keyword id="KW-0862">Zinc</keyword>
<dbReference type="EC" id="3.1.-.-" evidence="2"/>
<dbReference type="EMBL" id="AE000511">
    <property type="protein sequence ID" value="AAD08469.1"/>
    <property type="molecule type" value="Genomic_DNA"/>
</dbReference>
<dbReference type="PIR" id="F64698">
    <property type="entry name" value="F64698"/>
</dbReference>
<dbReference type="RefSeq" id="NP_208221.1">
    <property type="nucleotide sequence ID" value="NC_000915.1"/>
</dbReference>
<dbReference type="RefSeq" id="WP_000131629.1">
    <property type="nucleotide sequence ID" value="NC_018939.1"/>
</dbReference>
<dbReference type="PDB" id="7PCR">
    <property type="method" value="X-ray"/>
    <property type="resolution" value="2.75 A"/>
    <property type="chains" value="A=137-689"/>
</dbReference>
<dbReference type="PDBsum" id="7PCR"/>
<dbReference type="SMR" id="P56185"/>
<dbReference type="DIP" id="DIP-3218N"/>
<dbReference type="IntAct" id="P56185">
    <property type="interactions" value="14"/>
</dbReference>
<dbReference type="MINT" id="P56185"/>
<dbReference type="STRING" id="85962.HP_1430"/>
<dbReference type="PaxDb" id="85962-C694_07395"/>
<dbReference type="EnsemblBacteria" id="AAD08469">
    <property type="protein sequence ID" value="AAD08469"/>
    <property type="gene ID" value="HP_1430"/>
</dbReference>
<dbReference type="KEGG" id="heo:C694_07395"/>
<dbReference type="KEGG" id="hpy:HP_1430"/>
<dbReference type="PATRIC" id="fig|85962.47.peg.1534"/>
<dbReference type="eggNOG" id="COG0595">
    <property type="taxonomic scope" value="Bacteria"/>
</dbReference>
<dbReference type="InParanoid" id="P56185"/>
<dbReference type="OrthoDB" id="9770211at2"/>
<dbReference type="PhylomeDB" id="P56185"/>
<dbReference type="Proteomes" id="UP000000429">
    <property type="component" value="Chromosome"/>
</dbReference>
<dbReference type="GO" id="GO:0005737">
    <property type="term" value="C:cytoplasm"/>
    <property type="evidence" value="ECO:0000250"/>
    <property type="project" value="UniProtKB"/>
</dbReference>
<dbReference type="GO" id="GO:0004534">
    <property type="term" value="F:5'-3' RNA exonuclease activity"/>
    <property type="evidence" value="ECO:0000250"/>
    <property type="project" value="UniProtKB"/>
</dbReference>
<dbReference type="GO" id="GO:0042803">
    <property type="term" value="F:protein homodimerization activity"/>
    <property type="evidence" value="ECO:0000250"/>
    <property type="project" value="UniProtKB"/>
</dbReference>
<dbReference type="GO" id="GO:0003723">
    <property type="term" value="F:RNA binding"/>
    <property type="evidence" value="ECO:0007669"/>
    <property type="project" value="UniProtKB-UniRule"/>
</dbReference>
<dbReference type="GO" id="GO:0004521">
    <property type="term" value="F:RNA endonuclease activity"/>
    <property type="evidence" value="ECO:0000250"/>
    <property type="project" value="UniProtKB"/>
</dbReference>
<dbReference type="GO" id="GO:0008270">
    <property type="term" value="F:zinc ion binding"/>
    <property type="evidence" value="ECO:0007669"/>
    <property type="project" value="InterPro"/>
</dbReference>
<dbReference type="GO" id="GO:0051289">
    <property type="term" value="P:protein homotetramerization"/>
    <property type="evidence" value="ECO:0000314"/>
    <property type="project" value="UniProtKB"/>
</dbReference>
<dbReference type="GO" id="GO:0006364">
    <property type="term" value="P:rRNA processing"/>
    <property type="evidence" value="ECO:0007669"/>
    <property type="project" value="UniProtKB-UniRule"/>
</dbReference>
<dbReference type="CDD" id="cd07714">
    <property type="entry name" value="RNaseJ_MBL-fold"/>
    <property type="match status" value="1"/>
</dbReference>
<dbReference type="Gene3D" id="3.10.20.580">
    <property type="match status" value="1"/>
</dbReference>
<dbReference type="Gene3D" id="3.40.50.10710">
    <property type="entry name" value="Metallo-hydrolase/oxidoreductase"/>
    <property type="match status" value="1"/>
</dbReference>
<dbReference type="Gene3D" id="3.60.15.10">
    <property type="entry name" value="Ribonuclease Z/Hydroxyacylglutathione hydrolase-like"/>
    <property type="match status" value="1"/>
</dbReference>
<dbReference type="HAMAP" id="MF_01491">
    <property type="entry name" value="RNase_J_bact"/>
    <property type="match status" value="1"/>
</dbReference>
<dbReference type="InterPro" id="IPR001279">
    <property type="entry name" value="Metallo-B-lactamas"/>
</dbReference>
<dbReference type="InterPro" id="IPR036866">
    <property type="entry name" value="RibonucZ/Hydroxyglut_hydro"/>
</dbReference>
<dbReference type="InterPro" id="IPR011108">
    <property type="entry name" value="RMMBL"/>
</dbReference>
<dbReference type="InterPro" id="IPR004613">
    <property type="entry name" value="RNase_J"/>
</dbReference>
<dbReference type="InterPro" id="IPR042173">
    <property type="entry name" value="RNase_J_2"/>
</dbReference>
<dbReference type="InterPro" id="IPR055132">
    <property type="entry name" value="RNase_J_b_CASP"/>
</dbReference>
<dbReference type="InterPro" id="IPR030854">
    <property type="entry name" value="RNase_J_bac"/>
</dbReference>
<dbReference type="InterPro" id="IPR041636">
    <property type="entry name" value="RNase_J_C"/>
</dbReference>
<dbReference type="InterPro" id="IPR001587">
    <property type="entry name" value="RNase_J_CS"/>
</dbReference>
<dbReference type="NCBIfam" id="TIGR00649">
    <property type="entry name" value="MG423"/>
    <property type="match status" value="1"/>
</dbReference>
<dbReference type="PANTHER" id="PTHR43694">
    <property type="entry name" value="RIBONUCLEASE J"/>
    <property type="match status" value="1"/>
</dbReference>
<dbReference type="PANTHER" id="PTHR43694:SF1">
    <property type="entry name" value="RIBONUCLEASE J"/>
    <property type="match status" value="1"/>
</dbReference>
<dbReference type="Pfam" id="PF00753">
    <property type="entry name" value="Lactamase_B"/>
    <property type="match status" value="1"/>
</dbReference>
<dbReference type="Pfam" id="PF07521">
    <property type="entry name" value="RMMBL"/>
    <property type="match status" value="1"/>
</dbReference>
<dbReference type="Pfam" id="PF22505">
    <property type="entry name" value="RNase_J_b_CASP"/>
    <property type="match status" value="1"/>
</dbReference>
<dbReference type="Pfam" id="PF17770">
    <property type="entry name" value="RNase_J_C"/>
    <property type="match status" value="1"/>
</dbReference>
<dbReference type="SMART" id="SM00849">
    <property type="entry name" value="Lactamase_B"/>
    <property type="match status" value="1"/>
</dbReference>
<dbReference type="SUPFAM" id="SSF56281">
    <property type="entry name" value="Metallo-hydrolase/oxidoreductase"/>
    <property type="match status" value="1"/>
</dbReference>
<dbReference type="PROSITE" id="PS01292">
    <property type="entry name" value="UPF0036"/>
    <property type="match status" value="1"/>
</dbReference>
<name>RNJ_HELPY</name>
<organism>
    <name type="scientific">Helicobacter pylori (strain ATCC 700392 / 26695)</name>
    <name type="common">Campylobacter pylori</name>
    <dbReference type="NCBI Taxonomy" id="85962"/>
    <lineage>
        <taxon>Bacteria</taxon>
        <taxon>Pseudomonadati</taxon>
        <taxon>Campylobacterota</taxon>
        <taxon>Epsilonproteobacteria</taxon>
        <taxon>Campylobacterales</taxon>
        <taxon>Helicobacteraceae</taxon>
        <taxon>Helicobacter</taxon>
    </lineage>
</organism>
<comment type="function">
    <text evidence="1">An RNase that has 5'-3' exoribonuclease and endoribonuclease activity. Degrades 5'-monophosphorylated ssRNA and dsRNA, considerably more active on ssRNA. Association with RhpA significantly increases the dsRNase activity. Degrades RNA substrate with hairpin structures at both ends with low activity, but presence of RhpA significantly increases the activity on this substrate. Stimulates ATPase activity of RNA helicase RhpA. Involved in stabilization of mRNA but apparently not rRNA.</text>
</comment>
<comment type="cofactor">
    <cofactor evidence="2">
        <name>Zn(2+)</name>
        <dbReference type="ChEBI" id="CHEBI:29105"/>
    </cofactor>
    <text evidence="2">Binds up to 2 Zn(2+) ions per subunit. It is not clear if Zn(2+) or Mg(2+) is physiologically important.</text>
</comment>
<comment type="activity regulation">
    <text evidence="1">Catalytic activity is regulated by the balance between homodimers and homotetramers, with homotetramers being the active forms of this enzyme. Acetylation allosterically regulates the homooligomerization state and hence the catalytic activity.</text>
</comment>
<comment type="subunit">
    <text evidence="1 4 5">Homodimer (By similarity). Homotetramer; dimer of homodimers (PubMed:38057323). Interacts with RNA helicase RhpA, might be a member of a minimal RNA degradosome complex (PubMed:23093592).</text>
</comment>
<comment type="subcellular location">
    <subcellularLocation>
        <location evidence="2">Cytoplasm</location>
    </subcellularLocation>
    <text evidence="1">The RNaseJ-RhpA complex co-localizes with 70S ribosomes and polysomes; remains associated with ribosomes in the absence of RhpA.</text>
</comment>
<comment type="domain">
    <text evidence="1">The first 132 residues are not conserved outside of Helicobacter. Important for protein stability. The C-terminal domain is required for homooligomerization.</text>
</comment>
<comment type="PTM">
    <text evidence="1">Acetylated on nine lysine residues. Some of the residues are acetylated by multiple different mechanisms. RimL is partially responsible for the acetylation of Lys-321, Lys-395 and Lys-647. HPB8_1270 homolog is partially responsible for the acetylation of Lys-321, Lys-395, Lys-509 and Lys-647. Acetyl-phosphate-mediated non-enzymatic acetylation pathway takes part in the acetylation of Lys-132, Lys-321, Lys-395, Lys-509 and Lys-647. Acetylation of the remaining residues Lys-138, Lys-335, Lys-545 and Lys-632 occurs by a yet undetermined mechanism. Acetylation on a number of these residues is important for growth regulation and proper cell morphology.</text>
</comment>
<comment type="similarity">
    <text evidence="2">Belongs to the metallo-beta-lactamase superfamily. RNA-metabolizing metallo-beta-lactamase-like family. Bacterial RNase J subfamily.</text>
</comment>
<evidence type="ECO:0000250" key="1">
    <source>
        <dbReference type="UniProtKB" id="B9XZG7"/>
    </source>
</evidence>
<evidence type="ECO:0000255" key="2">
    <source>
        <dbReference type="HAMAP-Rule" id="MF_01491"/>
    </source>
</evidence>
<evidence type="ECO:0000256" key="3">
    <source>
        <dbReference type="SAM" id="MobiDB-lite"/>
    </source>
</evidence>
<evidence type="ECO:0000269" key="4">
    <source>
    </source>
</evidence>
<evidence type="ECO:0000269" key="5">
    <source>
    </source>
</evidence>
<evidence type="ECO:0000303" key="6">
    <source>
    </source>
</evidence>
<evidence type="ECO:0007829" key="7">
    <source>
        <dbReference type="PDB" id="7PCR"/>
    </source>
</evidence>
<protein>
    <recommendedName>
        <fullName evidence="2">Ribonuclease J</fullName>
        <shortName evidence="2 6">RNase J</shortName>
        <ecNumber evidence="2">3.1.-.-</ecNumber>
    </recommendedName>
</protein>
<accession>P56185</accession>
<sequence>MTDNNQNNENHENSSENSKADEMRAGAFERFTNRKKRFRENAQKNAEYSNHEASSHHKKEHRPNKKPNNHHKQKHAKTRNYAQEELDSNKVEGVTEILHVNERGTLGFHKELKKGVEANNKIQVEHLNPHYKMNLNSKASVKITPLGGLGEIGGNMMVIETPKSAIVIDAGMSFPKEGLFGVDILIPDFSYLHQIKDKIAGIIITHAHEDHIGATPYLFKELQFPLYGTPLSLGLIGSKFDEHGLKKYRSYFKIVEKRCPISVGEFIIEWIHITHSIIDSSALAIQTKAGTIIHTGDFKIDHTPVDNLPTDLYRLAHYGEKGVMLLLSDSTNSHKSGTTPSESTIAPAFDTLFKEAQGRVIMSTFSSNIHRVYQAIQYGIKYNRKIAVIGRSMEKNLDIARELGYIHLPYQSFIEANEVAKYPDNEILIVTTGSQGETMSALYRMATDEHRHISIKPNDLVIISAKAIPGNEASVSAVLNFLIKKEAKVAYQEFDNIHVSGHAAQEEQKLMLRLIKPKFFLPVHGEYNHVARHKQTAISCGVPEKNIYLMEDGDQVEVGPAFIKKVGTIKSGKSYVDNQSNLSIDTSIVQQREEVASAGVFVATIFVNKNKQALLESSQFSSLGLVGFKDEKPLIKEIQGGLEVLLKSSNAEILNNPKKLEDHTRNFIRKALFKKFRKYPAIICHAHSF</sequence>
<gene>
    <name evidence="2" type="primary">rnj</name>
    <name type="ordered locus">HP_1430</name>
</gene>
<proteinExistence type="evidence at protein level"/>
<reference key="1">
    <citation type="journal article" date="1997" name="Nature">
        <title>The complete genome sequence of the gastric pathogen Helicobacter pylori.</title>
        <authorList>
            <person name="Tomb J.-F."/>
            <person name="White O."/>
            <person name="Kerlavage A.R."/>
            <person name="Clayton R.A."/>
            <person name="Sutton G.G."/>
            <person name="Fleischmann R.D."/>
            <person name="Ketchum K.A."/>
            <person name="Klenk H.-P."/>
            <person name="Gill S.R."/>
            <person name="Dougherty B.A."/>
            <person name="Nelson K.E."/>
            <person name="Quackenbush J."/>
            <person name="Zhou L."/>
            <person name="Kirkness E.F."/>
            <person name="Peterson S.N."/>
            <person name="Loftus B.J."/>
            <person name="Richardson D.L."/>
            <person name="Dodson R.J."/>
            <person name="Khalak H.G."/>
            <person name="Glodek A."/>
            <person name="McKenney K."/>
            <person name="FitzGerald L.M."/>
            <person name="Lee N."/>
            <person name="Adams M.D."/>
            <person name="Hickey E.K."/>
            <person name="Berg D.E."/>
            <person name="Gocayne J.D."/>
            <person name="Utterback T.R."/>
            <person name="Peterson J.D."/>
            <person name="Kelley J.M."/>
            <person name="Cotton M.D."/>
            <person name="Weidman J.F."/>
            <person name="Fujii C."/>
            <person name="Bowman C."/>
            <person name="Watthey L."/>
            <person name="Wallin E."/>
            <person name="Hayes W.S."/>
            <person name="Borodovsky M."/>
            <person name="Karp P.D."/>
            <person name="Smith H.O."/>
            <person name="Fraser C.M."/>
            <person name="Venter J.C."/>
        </authorList>
    </citation>
    <scope>NUCLEOTIDE SEQUENCE [LARGE SCALE GENOMIC DNA]</scope>
    <source>
        <strain>ATCC 700392 / 26695</strain>
    </source>
</reference>
<reference key="2">
    <citation type="journal article" date="2013" name="Nucleic Acids Res.">
        <title>A minimal bacterial RNase J-based degradosome is associated with translating ribosomes.</title>
        <authorList>
            <person name="Redko Y."/>
            <person name="Aubert S."/>
            <person name="Stachowicz A."/>
            <person name="Lenormand P."/>
            <person name="Namane A."/>
            <person name="Darfeuille F."/>
            <person name="Thibonnier M."/>
            <person name="De Reuse H."/>
        </authorList>
    </citation>
    <scope>IDENTIFICATION BY MASS SPECTROMETRY</scope>
    <scope>INTERACTION WITH RHPA</scope>
    <source>
        <strain>ATCC 700392 / 26695</strain>
    </source>
</reference>
<reference key="3">
    <citation type="journal article" date="2023" name="Nat. Commun.">
        <title>Acetylation regulates the oligomerization state and activity of RNase J, the Helicobacter pylori major ribonuclease.</title>
        <authorList>
            <person name="Tejada-Arranz A."/>
            <person name="Lulla A."/>
            <person name="Bouilloux-Lafont M."/>
            <person name="Turlin E."/>
            <person name="Pei X.Y."/>
            <person name="Douche T."/>
            <person name="Matondo M."/>
            <person name="Williams A.H."/>
            <person name="Raynal B."/>
            <person name="Luisi B.F."/>
            <person name="De Reuse H."/>
        </authorList>
    </citation>
    <scope>X-RAY CRYSTALLOGRAPHY (2.75 ANGSTROMS) OF 137-689</scope>
    <scope>SUBUNIT</scope>
    <source>
        <strain evidence="6">ATCC 700392 / 26695</strain>
    </source>
</reference>
<feature type="chain" id="PRO_0000215269" description="Ribonuclease J">
    <location>
        <begin position="1"/>
        <end position="689"/>
    </location>
</feature>
<feature type="region of interest" description="Disordered" evidence="3">
    <location>
        <begin position="1"/>
        <end position="88"/>
    </location>
</feature>
<feature type="compositionally biased region" description="Basic and acidic residues" evidence="3">
    <location>
        <begin position="9"/>
        <end position="24"/>
    </location>
</feature>
<feature type="compositionally biased region" description="Basic residues" evidence="3">
    <location>
        <begin position="56"/>
        <end position="78"/>
    </location>
</feature>
<feature type="binding site" evidence="2">
    <location>
        <position position="206"/>
    </location>
    <ligand>
        <name>Zn(2+)</name>
        <dbReference type="ChEBI" id="CHEBI:29105"/>
        <label>1</label>
        <note>catalytic</note>
    </ligand>
</feature>
<feature type="binding site" evidence="2">
    <location>
        <position position="208"/>
    </location>
    <ligand>
        <name>Zn(2+)</name>
        <dbReference type="ChEBI" id="CHEBI:29105"/>
        <label>1</label>
        <note>catalytic</note>
    </ligand>
</feature>
<feature type="binding site" evidence="2">
    <location>
        <position position="210"/>
    </location>
    <ligand>
        <name>Zn(2+)</name>
        <dbReference type="ChEBI" id="CHEBI:29105"/>
        <label>2</label>
        <note>catalytic</note>
    </ligand>
</feature>
<feature type="binding site" evidence="2">
    <location>
        <position position="211"/>
    </location>
    <ligand>
        <name>Zn(2+)</name>
        <dbReference type="ChEBI" id="CHEBI:29105"/>
        <label>2</label>
        <note>catalytic</note>
    </ligand>
</feature>
<feature type="binding site" evidence="2">
    <location>
        <position position="275"/>
    </location>
    <ligand>
        <name>Zn(2+)</name>
        <dbReference type="ChEBI" id="CHEBI:29105"/>
        <label>1</label>
        <note>catalytic</note>
    </ligand>
</feature>
<feature type="binding site" evidence="2">
    <location>
        <position position="297"/>
    </location>
    <ligand>
        <name>Zn(2+)</name>
        <dbReference type="ChEBI" id="CHEBI:29105"/>
        <label>1</label>
        <note>catalytic</note>
    </ligand>
</feature>
<feature type="binding site" evidence="2">
    <location>
        <position position="297"/>
    </location>
    <ligand>
        <name>Zn(2+)</name>
        <dbReference type="ChEBI" id="CHEBI:29105"/>
        <label>2</label>
        <note>catalytic</note>
    </ligand>
</feature>
<feature type="binding site" evidence="2">
    <location>
        <begin position="498"/>
        <end position="502"/>
    </location>
    <ligand>
        <name>substrate</name>
    </ligand>
</feature>
<feature type="binding site" evidence="2">
    <location>
        <position position="524"/>
    </location>
    <ligand>
        <name>Zn(2+)</name>
        <dbReference type="ChEBI" id="CHEBI:29105"/>
        <label>2</label>
        <note>catalytic</note>
    </ligand>
</feature>
<feature type="modified residue" description="N6-acetyllysine" evidence="1">
    <location>
        <position position="132"/>
    </location>
</feature>
<feature type="modified residue" description="N6-acetyllysine" evidence="1">
    <location>
        <position position="138"/>
    </location>
</feature>
<feature type="modified residue" description="N6-acetyllysine" evidence="1">
    <location>
        <position position="321"/>
    </location>
</feature>
<feature type="modified residue" description="N6-acetyllysine" evidence="1">
    <location>
        <position position="335"/>
    </location>
</feature>
<feature type="modified residue" description="N6-acetyllysine" evidence="1">
    <location>
        <position position="395"/>
    </location>
</feature>
<feature type="modified residue" description="N6-acetyllysine" evidence="1">
    <location>
        <position position="509"/>
    </location>
</feature>
<feature type="modified residue" description="N6-acetyllysine" evidence="1">
    <location>
        <position position="545"/>
    </location>
</feature>
<feature type="modified residue" description="N6-acetyllysine" evidence="1">
    <location>
        <position position="632"/>
    </location>
</feature>
<feature type="modified residue" description="N6-acetyllysine" evidence="1">
    <location>
        <position position="647"/>
    </location>
</feature>
<feature type="strand" evidence="7">
    <location>
        <begin position="141"/>
        <end position="153"/>
    </location>
</feature>
<feature type="strand" evidence="7">
    <location>
        <begin position="156"/>
        <end position="161"/>
    </location>
</feature>
<feature type="strand" evidence="7">
    <location>
        <begin position="164"/>
        <end position="168"/>
    </location>
</feature>
<feature type="strand" evidence="7">
    <location>
        <begin position="185"/>
        <end position="187"/>
    </location>
</feature>
<feature type="helix" evidence="7">
    <location>
        <begin position="190"/>
        <end position="194"/>
    </location>
</feature>
<feature type="turn" evidence="7">
    <location>
        <begin position="195"/>
        <end position="198"/>
    </location>
</feature>
<feature type="strand" evidence="7">
    <location>
        <begin position="199"/>
        <end position="203"/>
    </location>
</feature>
<feature type="strand" evidence="7">
    <location>
        <begin position="206"/>
        <end position="208"/>
    </location>
</feature>
<feature type="helix" evidence="7">
    <location>
        <begin position="209"/>
        <end position="212"/>
    </location>
</feature>
<feature type="helix" evidence="7">
    <location>
        <begin position="215"/>
        <end position="219"/>
    </location>
</feature>
<feature type="strand" evidence="7">
    <location>
        <begin position="226"/>
        <end position="228"/>
    </location>
</feature>
<feature type="helix" evidence="7">
    <location>
        <begin position="230"/>
        <end position="242"/>
    </location>
</feature>
<feature type="helix" evidence="7">
    <location>
        <begin position="246"/>
        <end position="251"/>
    </location>
</feature>
<feature type="strand" evidence="7">
    <location>
        <begin position="252"/>
        <end position="254"/>
    </location>
</feature>
<feature type="strand" evidence="7">
    <location>
        <begin position="261"/>
        <end position="263"/>
    </location>
</feature>
<feature type="strand" evidence="7">
    <location>
        <begin position="266"/>
        <end position="272"/>
    </location>
</feature>
<feature type="strand" evidence="7">
    <location>
        <begin position="276"/>
        <end position="278"/>
    </location>
</feature>
<feature type="strand" evidence="7">
    <location>
        <begin position="280"/>
        <end position="287"/>
    </location>
</feature>
<feature type="strand" evidence="7">
    <location>
        <begin position="290"/>
        <end position="294"/>
    </location>
</feature>
<feature type="helix" evidence="7">
    <location>
        <begin position="312"/>
        <end position="321"/>
    </location>
</feature>
<feature type="strand" evidence="7">
    <location>
        <begin position="323"/>
        <end position="329"/>
    </location>
</feature>
<feature type="turn" evidence="7">
    <location>
        <begin position="331"/>
        <end position="334"/>
    </location>
</feature>
<feature type="helix" evidence="7">
    <location>
        <begin position="342"/>
        <end position="344"/>
    </location>
</feature>
<feature type="helix" evidence="7">
    <location>
        <begin position="346"/>
        <end position="354"/>
    </location>
</feature>
<feature type="strand" evidence="7">
    <location>
        <begin position="360"/>
        <end position="363"/>
    </location>
</feature>
<feature type="helix" evidence="7">
    <location>
        <begin position="369"/>
        <end position="381"/>
    </location>
</feature>
<feature type="strand" evidence="7">
    <location>
        <begin position="385"/>
        <end position="389"/>
    </location>
</feature>
<feature type="helix" evidence="7">
    <location>
        <begin position="391"/>
        <end position="402"/>
    </location>
</feature>
<feature type="helix" evidence="7">
    <location>
        <begin position="410"/>
        <end position="412"/>
    </location>
</feature>
<feature type="helix" evidence="7">
    <location>
        <begin position="416"/>
        <end position="421"/>
    </location>
</feature>
<feature type="helix" evidence="7">
    <location>
        <begin position="424"/>
        <end position="426"/>
    </location>
</feature>
<feature type="strand" evidence="7">
    <location>
        <begin position="427"/>
        <end position="431"/>
    </location>
</feature>
<feature type="helix" evidence="7">
    <location>
        <begin position="439"/>
        <end position="446"/>
    </location>
</feature>
<feature type="strand" evidence="7">
    <location>
        <begin position="450"/>
        <end position="452"/>
    </location>
</feature>
<feature type="strand" evidence="7">
    <location>
        <begin position="460"/>
        <end position="463"/>
    </location>
</feature>
<feature type="helix" evidence="7">
    <location>
        <begin position="472"/>
        <end position="484"/>
    </location>
</feature>
<feature type="strand" evidence="7">
    <location>
        <begin position="488"/>
        <end position="490"/>
    </location>
</feature>
<feature type="helix" evidence="7">
    <location>
        <begin position="492"/>
        <end position="494"/>
    </location>
</feature>
<feature type="turn" evidence="7">
    <location>
        <begin position="496"/>
        <end position="498"/>
    </location>
</feature>
<feature type="helix" evidence="7">
    <location>
        <begin position="505"/>
        <end position="515"/>
    </location>
</feature>
<feature type="strand" evidence="7">
    <location>
        <begin position="517"/>
        <end position="525"/>
    </location>
</feature>
<feature type="helix" evidence="7">
    <location>
        <begin position="527"/>
        <end position="539"/>
    </location>
</feature>
<feature type="helix" evidence="7">
    <location>
        <begin position="544"/>
        <end position="546"/>
    </location>
</feature>
<feature type="strand" evidence="7">
    <location>
        <begin position="554"/>
        <end position="559"/>
    </location>
</feature>
<feature type="strand" evidence="7">
    <location>
        <begin position="562"/>
        <end position="568"/>
    </location>
</feature>
<feature type="strand" evidence="7">
    <location>
        <begin position="573"/>
        <end position="576"/>
    </location>
</feature>
<feature type="turn" evidence="7">
    <location>
        <begin position="578"/>
        <end position="580"/>
    </location>
</feature>
<feature type="strand" evidence="7">
    <location>
        <begin position="583"/>
        <end position="585"/>
    </location>
</feature>
<feature type="helix" evidence="7">
    <location>
        <begin position="586"/>
        <end position="596"/>
    </location>
</feature>
<feature type="strand" evidence="7">
    <location>
        <begin position="600"/>
        <end position="607"/>
    </location>
</feature>
<feature type="turn" evidence="7">
    <location>
        <begin position="609"/>
        <end position="611"/>
    </location>
</feature>
<feature type="strand" evidence="7">
    <location>
        <begin position="613"/>
        <end position="626"/>
    </location>
</feature>
<feature type="helix" evidence="7">
    <location>
        <begin position="628"/>
        <end position="647"/>
    </location>
</feature>
<feature type="helix" evidence="7">
    <location>
        <begin position="651"/>
        <end position="655"/>
    </location>
</feature>
<feature type="helix" evidence="7">
    <location>
        <begin position="657"/>
        <end position="676"/>
    </location>
</feature>
<feature type="strand" evidence="7">
    <location>
        <begin position="681"/>
        <end position="687"/>
    </location>
</feature>